<protein>
    <recommendedName>
        <fullName evidence="1">tRNA(Met) cytidine acetyltransferase TmcA</fullName>
        <ecNumber evidence="1">2.3.1.193</ecNumber>
    </recommendedName>
</protein>
<organism>
    <name type="scientific">Vibrio cholerae serotype O1 (strain ATCC 39315 / El Tor Inaba N16961)</name>
    <dbReference type="NCBI Taxonomy" id="243277"/>
    <lineage>
        <taxon>Bacteria</taxon>
        <taxon>Pseudomonadati</taxon>
        <taxon>Pseudomonadota</taxon>
        <taxon>Gammaproteobacteria</taxon>
        <taxon>Vibrionales</taxon>
        <taxon>Vibrionaceae</taxon>
        <taxon>Vibrio</taxon>
    </lineage>
</organism>
<sequence>MFPPSYDAFQGVTAIGWACANMAHHFGISLVMTQPITYLLQLQQLAKQGQTRFGCWLRGDAQWQHHLLKTLVPHFAEQPILMLGQTELEGVTCVDYRQGQQWLGRECQLLIVDLTQGWDANSFNAVLGTLVGGGLLLVVGEPTTLNHCARVWLERACHRLLVITPQTVPALPNSDSVTRTNTEQTYTEQRLAIDSIIKVVTGHRKRPLVLTADRGRGKTSALGLAAAELMSSRSMHIVVTAPTLAAVEPLFVHAQRTLPQAHRQRGEVQTAQSSLRFMAPDELLRTQPESDLLLVDEAAALPLPFLKRWVERYHRAVFSSTIHGYEGCGRGFSLKFQSWLQVQRPQMRSLHLEQPIRWAAGDALEQWQNQVFLLQSELPEVALEQAREPLSFSLFSQPECVEQPERLAQVFALLVNAHYQTSPNDLFALLQDEAMTLFVAYQGEVCVGCVLAVREGELDAPTIEAIQLGTRRPKGHLTPVTLANQLGISQAARQSCWRILRIAVHPDCQRQGIGSQLLTHFIAQHHADYYATSFGVSEDLLPFWLANHFVPIKLGSHRDQASGCYSLLMVRGEHLDWLEQAKQQFSAHWIFELSDSLQALEPQIIQQLLPSTVALPQPLIPLELIERYARGGANYESVAVWLYAWLLATAPSLESLSPLLISKILQRKSWAACAEQFQLSGKRQVEQAVRTEILALLVNLQCKYTLPI</sequence>
<accession>Q9KKJ5</accession>
<dbReference type="EC" id="2.3.1.193" evidence="1"/>
<dbReference type="EMBL" id="AE003853">
    <property type="protein sequence ID" value="AAF97003.1"/>
    <property type="molecule type" value="Genomic_DNA"/>
</dbReference>
<dbReference type="PIR" id="A82377">
    <property type="entry name" value="A82377"/>
</dbReference>
<dbReference type="RefSeq" id="NP_233491.1">
    <property type="nucleotide sequence ID" value="NC_002506.1"/>
</dbReference>
<dbReference type="SMR" id="Q9KKJ5"/>
<dbReference type="STRING" id="243277.VC_A1112"/>
<dbReference type="DNASU" id="2612182"/>
<dbReference type="EnsemblBacteria" id="AAF97003">
    <property type="protein sequence ID" value="AAF97003"/>
    <property type="gene ID" value="VC_A1112"/>
</dbReference>
<dbReference type="KEGG" id="vch:VC_A1112"/>
<dbReference type="PATRIC" id="fig|243277.26.peg.3718"/>
<dbReference type="eggNOG" id="COG1444">
    <property type="taxonomic scope" value="Bacteria"/>
</dbReference>
<dbReference type="HOGENOM" id="CLU_004652_1_0_6"/>
<dbReference type="Proteomes" id="UP000000584">
    <property type="component" value="Chromosome 2"/>
</dbReference>
<dbReference type="GO" id="GO:0005737">
    <property type="term" value="C:cytoplasm"/>
    <property type="evidence" value="ECO:0007669"/>
    <property type="project" value="UniProtKB-SubCell"/>
</dbReference>
<dbReference type="GO" id="GO:1990883">
    <property type="term" value="F:18S rRNA cytidine N-acetyltransferase activity"/>
    <property type="evidence" value="ECO:0000318"/>
    <property type="project" value="GO_Central"/>
</dbReference>
<dbReference type="GO" id="GO:0005524">
    <property type="term" value="F:ATP binding"/>
    <property type="evidence" value="ECO:0007669"/>
    <property type="project" value="UniProtKB-UniRule"/>
</dbReference>
<dbReference type="GO" id="GO:0000049">
    <property type="term" value="F:tRNA binding"/>
    <property type="evidence" value="ECO:0000318"/>
    <property type="project" value="GO_Central"/>
</dbReference>
<dbReference type="GO" id="GO:0051392">
    <property type="term" value="F:tRNA N4-acetyltransferase activity"/>
    <property type="evidence" value="ECO:0000318"/>
    <property type="project" value="GO_Central"/>
</dbReference>
<dbReference type="GO" id="GO:1904812">
    <property type="term" value="P:rRNA acetylation involved in maturation of SSU-rRNA"/>
    <property type="evidence" value="ECO:0000318"/>
    <property type="project" value="GO_Central"/>
</dbReference>
<dbReference type="GO" id="GO:0051391">
    <property type="term" value="P:tRNA acetylation"/>
    <property type="evidence" value="ECO:0000318"/>
    <property type="project" value="GO_Central"/>
</dbReference>
<dbReference type="GO" id="GO:0002101">
    <property type="term" value="P:tRNA wobble cytosine modification"/>
    <property type="evidence" value="ECO:0000318"/>
    <property type="project" value="GO_Central"/>
</dbReference>
<dbReference type="CDD" id="cd04301">
    <property type="entry name" value="NAT_SF"/>
    <property type="match status" value="1"/>
</dbReference>
<dbReference type="FunFam" id="3.40.50.11040:FF:000008">
    <property type="entry name" value="tRNA(Met) cytidine acetyltransferase TmcA"/>
    <property type="match status" value="1"/>
</dbReference>
<dbReference type="FunFam" id="3.40.50.300:FF:001011">
    <property type="entry name" value="tRNA(Met) cytidine acetyltransferase TmcA"/>
    <property type="match status" value="1"/>
</dbReference>
<dbReference type="Gene3D" id="3.40.50.11040">
    <property type="match status" value="1"/>
</dbReference>
<dbReference type="Gene3D" id="3.40.630.30">
    <property type="match status" value="1"/>
</dbReference>
<dbReference type="Gene3D" id="3.40.50.300">
    <property type="entry name" value="P-loop containing nucleotide triphosphate hydrolases"/>
    <property type="match status" value="1"/>
</dbReference>
<dbReference type="Gene3D" id="1.20.120.890">
    <property type="entry name" value="tRNA(Met) cytidine acetyltransferase, tail domain"/>
    <property type="match status" value="1"/>
</dbReference>
<dbReference type="HAMAP" id="MF_01886">
    <property type="entry name" value="tRNA_acetyltr_TmcA"/>
    <property type="match status" value="1"/>
</dbReference>
<dbReference type="InterPro" id="IPR016181">
    <property type="entry name" value="Acyl_CoA_acyltransferase"/>
</dbReference>
<dbReference type="InterPro" id="IPR000182">
    <property type="entry name" value="GNAT_dom"/>
</dbReference>
<dbReference type="InterPro" id="IPR007807">
    <property type="entry name" value="NAT10/TcmA_helicase"/>
</dbReference>
<dbReference type="InterPro" id="IPR027417">
    <property type="entry name" value="P-loop_NTPase"/>
</dbReference>
<dbReference type="InterPro" id="IPR032672">
    <property type="entry name" value="TmcA/NAT10/Kre33"/>
</dbReference>
<dbReference type="InterPro" id="IPR038321">
    <property type="entry name" value="TmcA_C_sf"/>
</dbReference>
<dbReference type="InterPro" id="IPR013562">
    <property type="entry name" value="TmcA_N"/>
</dbReference>
<dbReference type="InterPro" id="IPR024914">
    <property type="entry name" value="tRNA_acetyltr_TmcA"/>
</dbReference>
<dbReference type="PANTHER" id="PTHR10925">
    <property type="entry name" value="N-ACETYLTRANSFERASE 10"/>
    <property type="match status" value="1"/>
</dbReference>
<dbReference type="PANTHER" id="PTHR10925:SF5">
    <property type="entry name" value="RNA CYTIDINE ACETYLTRANSFERASE"/>
    <property type="match status" value="1"/>
</dbReference>
<dbReference type="Pfam" id="PF13718">
    <property type="entry name" value="GNAT_acetyltr_2"/>
    <property type="match status" value="2"/>
</dbReference>
<dbReference type="Pfam" id="PF05127">
    <property type="entry name" value="NAT10_TcmA_helicase"/>
    <property type="match status" value="1"/>
</dbReference>
<dbReference type="Pfam" id="PF08351">
    <property type="entry name" value="TmcA_N"/>
    <property type="match status" value="1"/>
</dbReference>
<dbReference type="SUPFAM" id="SSF55729">
    <property type="entry name" value="Acyl-CoA N-acyltransferases (Nat)"/>
    <property type="match status" value="1"/>
</dbReference>
<dbReference type="SUPFAM" id="SSF52540">
    <property type="entry name" value="P-loop containing nucleoside triphosphate hydrolases"/>
    <property type="match status" value="1"/>
</dbReference>
<dbReference type="PROSITE" id="PS51186">
    <property type="entry name" value="GNAT"/>
    <property type="match status" value="1"/>
</dbReference>
<proteinExistence type="inferred from homology"/>
<name>TMCA_VIBCH</name>
<comment type="function">
    <text evidence="1">Catalyzes the formation of N(4)-acetylcytidine (ac(4)C) at the wobble position of tRNA(Met), by using acetyl-CoA as an acetyl donor and ATP (or GTP).</text>
</comment>
<comment type="catalytic activity">
    <reaction evidence="1">
        <text>cytidine(34) in elongator tRNA(Met) + acetyl-CoA + ATP + H2O = N(4)-acetylcytidine(34) in elongator tRNA(Met) + ADP + phosphate + CoA + H(+)</text>
        <dbReference type="Rhea" id="RHEA:43788"/>
        <dbReference type="Rhea" id="RHEA-COMP:10693"/>
        <dbReference type="Rhea" id="RHEA-COMP:10694"/>
        <dbReference type="ChEBI" id="CHEBI:15377"/>
        <dbReference type="ChEBI" id="CHEBI:15378"/>
        <dbReference type="ChEBI" id="CHEBI:30616"/>
        <dbReference type="ChEBI" id="CHEBI:43474"/>
        <dbReference type="ChEBI" id="CHEBI:57287"/>
        <dbReference type="ChEBI" id="CHEBI:57288"/>
        <dbReference type="ChEBI" id="CHEBI:74900"/>
        <dbReference type="ChEBI" id="CHEBI:82748"/>
        <dbReference type="ChEBI" id="CHEBI:456216"/>
        <dbReference type="EC" id="2.3.1.193"/>
    </reaction>
</comment>
<comment type="subcellular location">
    <subcellularLocation>
        <location evidence="1">Cytoplasm</location>
    </subcellularLocation>
</comment>
<comment type="similarity">
    <text evidence="1">Belongs to the RNA cytidine acetyltransferase family. TmcA subfamily.</text>
</comment>
<gene>
    <name evidence="1" type="primary">tmcA</name>
    <name type="ordered locus">VC_A1112</name>
</gene>
<keyword id="KW-0012">Acyltransferase</keyword>
<keyword id="KW-0067">ATP-binding</keyword>
<keyword id="KW-0963">Cytoplasm</keyword>
<keyword id="KW-0547">Nucleotide-binding</keyword>
<keyword id="KW-1185">Reference proteome</keyword>
<keyword id="KW-0694">RNA-binding</keyword>
<keyword id="KW-0808">Transferase</keyword>
<keyword id="KW-0819">tRNA processing</keyword>
<keyword id="KW-0820">tRNA-binding</keyword>
<feature type="chain" id="PRO_0000403126" description="tRNA(Met) cytidine acetyltransferase TmcA">
    <location>
        <begin position="1"/>
        <end position="708"/>
    </location>
</feature>
<feature type="domain" description="N-acetyltransferase" evidence="1">
    <location>
        <begin position="398"/>
        <end position="574"/>
    </location>
</feature>
<feature type="binding site" evidence="1">
    <location>
        <position position="189"/>
    </location>
    <ligand>
        <name>ATP</name>
        <dbReference type="ChEBI" id="CHEBI:30616"/>
    </ligand>
</feature>
<feature type="binding site" evidence="1">
    <location>
        <begin position="215"/>
        <end position="224"/>
    </location>
    <ligand>
        <name>ATP</name>
        <dbReference type="ChEBI" id="CHEBI:30616"/>
    </ligand>
</feature>
<feature type="binding site" evidence="1">
    <location>
        <position position="357"/>
    </location>
    <ligand>
        <name>ATP</name>
        <dbReference type="ChEBI" id="CHEBI:30616"/>
    </ligand>
</feature>
<feature type="binding site" evidence="1">
    <location>
        <begin position="502"/>
        <end position="504"/>
    </location>
    <ligand>
        <name>acetyl-CoA</name>
        <dbReference type="ChEBI" id="CHEBI:57288"/>
    </ligand>
</feature>
<feature type="binding site" evidence="1">
    <location>
        <begin position="509"/>
        <end position="515"/>
    </location>
    <ligand>
        <name>acetyl-CoA</name>
        <dbReference type="ChEBI" id="CHEBI:57288"/>
    </ligand>
</feature>
<reference key="1">
    <citation type="journal article" date="2000" name="Nature">
        <title>DNA sequence of both chromosomes of the cholera pathogen Vibrio cholerae.</title>
        <authorList>
            <person name="Heidelberg J.F."/>
            <person name="Eisen J.A."/>
            <person name="Nelson W.C."/>
            <person name="Clayton R.A."/>
            <person name="Gwinn M.L."/>
            <person name="Dodson R.J."/>
            <person name="Haft D.H."/>
            <person name="Hickey E.K."/>
            <person name="Peterson J.D."/>
            <person name="Umayam L.A."/>
            <person name="Gill S.R."/>
            <person name="Nelson K.E."/>
            <person name="Read T.D."/>
            <person name="Tettelin H."/>
            <person name="Richardson D.L."/>
            <person name="Ermolaeva M.D."/>
            <person name="Vamathevan J.J."/>
            <person name="Bass S."/>
            <person name="Qin H."/>
            <person name="Dragoi I."/>
            <person name="Sellers P."/>
            <person name="McDonald L.A."/>
            <person name="Utterback T.R."/>
            <person name="Fleischmann R.D."/>
            <person name="Nierman W.C."/>
            <person name="White O."/>
            <person name="Salzberg S.L."/>
            <person name="Smith H.O."/>
            <person name="Colwell R.R."/>
            <person name="Mekalanos J.J."/>
            <person name="Venter J.C."/>
            <person name="Fraser C.M."/>
        </authorList>
    </citation>
    <scope>NUCLEOTIDE SEQUENCE [LARGE SCALE GENOMIC DNA]</scope>
    <source>
        <strain>ATCC 39315 / El Tor Inaba N16961</strain>
    </source>
</reference>
<evidence type="ECO:0000255" key="1">
    <source>
        <dbReference type="HAMAP-Rule" id="MF_01886"/>
    </source>
</evidence>